<keyword id="KW-0004">4Fe-4S</keyword>
<keyword id="KW-0150">Chloroplast</keyword>
<keyword id="KW-0408">Iron</keyword>
<keyword id="KW-0411">Iron-sulfur</keyword>
<keyword id="KW-0472">Membrane</keyword>
<keyword id="KW-0479">Metal-binding</keyword>
<keyword id="KW-0520">NAD</keyword>
<keyword id="KW-0521">NADP</keyword>
<keyword id="KW-0934">Plastid</keyword>
<keyword id="KW-0618">Plastoquinone</keyword>
<keyword id="KW-0874">Quinone</keyword>
<keyword id="KW-0677">Repeat</keyword>
<keyword id="KW-0793">Thylakoid</keyword>
<keyword id="KW-1278">Translocase</keyword>
<gene>
    <name evidence="1" type="primary">ndhI</name>
</gene>
<reference key="1">
    <citation type="submission" date="2007-03" db="EMBL/GenBank/DDBJ databases">
        <title>Sequencing analysis of Lepidium virginicum JO26 chloroplast DNA.</title>
        <authorList>
            <person name="Hosouchi T."/>
            <person name="Tsuruoka H."/>
            <person name="Kotani H."/>
        </authorList>
    </citation>
    <scope>NUCLEOTIDE SEQUENCE [LARGE SCALE GENOMIC DNA]</scope>
</reference>
<geneLocation type="chloroplast"/>
<name>NDHI_LEPVR</name>
<dbReference type="EC" id="7.1.1.-" evidence="1"/>
<dbReference type="EMBL" id="AP009374">
    <property type="protein sequence ID" value="BAF50518.1"/>
    <property type="molecule type" value="Genomic_DNA"/>
</dbReference>
<dbReference type="RefSeq" id="YP_001123693.1">
    <property type="nucleotide sequence ID" value="NC_009273.1"/>
</dbReference>
<dbReference type="SMR" id="A4QLG3"/>
<dbReference type="GeneID" id="4962003"/>
<dbReference type="GO" id="GO:0009535">
    <property type="term" value="C:chloroplast thylakoid membrane"/>
    <property type="evidence" value="ECO:0007669"/>
    <property type="project" value="UniProtKB-SubCell"/>
</dbReference>
<dbReference type="GO" id="GO:0051539">
    <property type="term" value="F:4 iron, 4 sulfur cluster binding"/>
    <property type="evidence" value="ECO:0007669"/>
    <property type="project" value="UniProtKB-KW"/>
</dbReference>
<dbReference type="GO" id="GO:0005506">
    <property type="term" value="F:iron ion binding"/>
    <property type="evidence" value="ECO:0007669"/>
    <property type="project" value="UniProtKB-UniRule"/>
</dbReference>
<dbReference type="GO" id="GO:0008137">
    <property type="term" value="F:NADH dehydrogenase (ubiquinone) activity"/>
    <property type="evidence" value="ECO:0007669"/>
    <property type="project" value="InterPro"/>
</dbReference>
<dbReference type="GO" id="GO:0048038">
    <property type="term" value="F:quinone binding"/>
    <property type="evidence" value="ECO:0007669"/>
    <property type="project" value="UniProtKB-KW"/>
</dbReference>
<dbReference type="GO" id="GO:0019684">
    <property type="term" value="P:photosynthesis, light reaction"/>
    <property type="evidence" value="ECO:0007669"/>
    <property type="project" value="UniProtKB-UniRule"/>
</dbReference>
<dbReference type="FunFam" id="3.30.70.3270:FF:000006">
    <property type="entry name" value="NAD(P)H-quinone oxidoreductase subunit I, chloroplastic"/>
    <property type="match status" value="1"/>
</dbReference>
<dbReference type="Gene3D" id="3.30.70.3270">
    <property type="match status" value="1"/>
</dbReference>
<dbReference type="HAMAP" id="MF_01351">
    <property type="entry name" value="NDH1_NuoI"/>
    <property type="match status" value="1"/>
</dbReference>
<dbReference type="InterPro" id="IPR017896">
    <property type="entry name" value="4Fe4S_Fe-S-bd"/>
</dbReference>
<dbReference type="InterPro" id="IPR017900">
    <property type="entry name" value="4Fe4S_Fe_S_CS"/>
</dbReference>
<dbReference type="InterPro" id="IPR010226">
    <property type="entry name" value="NADH_quinone_OxRdtase_chainI"/>
</dbReference>
<dbReference type="InterPro" id="IPR004497">
    <property type="entry name" value="NDHI"/>
</dbReference>
<dbReference type="NCBIfam" id="TIGR00403">
    <property type="entry name" value="ndhI"/>
    <property type="match status" value="1"/>
</dbReference>
<dbReference type="NCBIfam" id="TIGR01971">
    <property type="entry name" value="NuoI"/>
    <property type="match status" value="1"/>
</dbReference>
<dbReference type="NCBIfam" id="NF004537">
    <property type="entry name" value="PRK05888.1-3"/>
    <property type="match status" value="1"/>
</dbReference>
<dbReference type="PANTHER" id="PTHR47275">
    <property type="entry name" value="NAD(P)H-QUINONE OXIDOREDUCTASE SUBUNIT I, CHLOROPLASTIC"/>
    <property type="match status" value="1"/>
</dbReference>
<dbReference type="PANTHER" id="PTHR47275:SF1">
    <property type="entry name" value="NAD(P)H-QUINONE OXIDOREDUCTASE SUBUNIT I, CHLOROPLASTIC"/>
    <property type="match status" value="1"/>
</dbReference>
<dbReference type="Pfam" id="PF13187">
    <property type="entry name" value="Fer4_9"/>
    <property type="match status" value="1"/>
</dbReference>
<dbReference type="SUPFAM" id="SSF54862">
    <property type="entry name" value="4Fe-4S ferredoxins"/>
    <property type="match status" value="1"/>
</dbReference>
<dbReference type="PROSITE" id="PS00198">
    <property type="entry name" value="4FE4S_FER_1"/>
    <property type="match status" value="2"/>
</dbReference>
<dbReference type="PROSITE" id="PS51379">
    <property type="entry name" value="4FE4S_FER_2"/>
    <property type="match status" value="2"/>
</dbReference>
<feature type="chain" id="PRO_0000298578" description="NAD(P)H-quinone oxidoreductase subunit I, chloroplastic">
    <location>
        <begin position="1"/>
        <end position="167"/>
    </location>
</feature>
<feature type="domain" description="4Fe-4S ferredoxin-type 1" evidence="1">
    <location>
        <begin position="55"/>
        <end position="84"/>
    </location>
</feature>
<feature type="domain" description="4Fe-4S ferredoxin-type 2" evidence="1">
    <location>
        <begin position="95"/>
        <end position="124"/>
    </location>
</feature>
<feature type="binding site" evidence="1">
    <location>
        <position position="64"/>
    </location>
    <ligand>
        <name>[4Fe-4S] cluster</name>
        <dbReference type="ChEBI" id="CHEBI:49883"/>
        <label>1</label>
    </ligand>
</feature>
<feature type="binding site" evidence="1">
    <location>
        <position position="67"/>
    </location>
    <ligand>
        <name>[4Fe-4S] cluster</name>
        <dbReference type="ChEBI" id="CHEBI:49883"/>
        <label>1</label>
    </ligand>
</feature>
<feature type="binding site" evidence="1">
    <location>
        <position position="70"/>
    </location>
    <ligand>
        <name>[4Fe-4S] cluster</name>
        <dbReference type="ChEBI" id="CHEBI:49883"/>
        <label>1</label>
    </ligand>
</feature>
<feature type="binding site" evidence="1">
    <location>
        <position position="74"/>
    </location>
    <ligand>
        <name>[4Fe-4S] cluster</name>
        <dbReference type="ChEBI" id="CHEBI:49883"/>
        <label>2</label>
    </ligand>
</feature>
<feature type="binding site" evidence="1">
    <location>
        <position position="104"/>
    </location>
    <ligand>
        <name>[4Fe-4S] cluster</name>
        <dbReference type="ChEBI" id="CHEBI:49883"/>
        <label>2</label>
    </ligand>
</feature>
<feature type="binding site" evidence="1">
    <location>
        <position position="107"/>
    </location>
    <ligand>
        <name>[4Fe-4S] cluster</name>
        <dbReference type="ChEBI" id="CHEBI:49883"/>
        <label>2</label>
    </ligand>
</feature>
<feature type="binding site" evidence="1">
    <location>
        <position position="110"/>
    </location>
    <ligand>
        <name>[4Fe-4S] cluster</name>
        <dbReference type="ChEBI" id="CHEBI:49883"/>
        <label>2</label>
    </ligand>
</feature>
<feature type="binding site" evidence="1">
    <location>
        <position position="114"/>
    </location>
    <ligand>
        <name>[4Fe-4S] cluster</name>
        <dbReference type="ChEBI" id="CHEBI:49883"/>
        <label>1</label>
    </ligand>
</feature>
<comment type="function">
    <text evidence="1">NDH shuttles electrons from NAD(P)H:plastoquinone, via FMN and iron-sulfur (Fe-S) centers, to quinones in the photosynthetic chain and possibly in a chloroplast respiratory chain. The immediate electron acceptor for the enzyme in this species is believed to be plastoquinone. Couples the redox reaction to proton translocation, and thus conserves the redox energy in a proton gradient.</text>
</comment>
<comment type="catalytic activity">
    <reaction evidence="1">
        <text>a plastoquinone + NADH + (n+1) H(+)(in) = a plastoquinol + NAD(+) + n H(+)(out)</text>
        <dbReference type="Rhea" id="RHEA:42608"/>
        <dbReference type="Rhea" id="RHEA-COMP:9561"/>
        <dbReference type="Rhea" id="RHEA-COMP:9562"/>
        <dbReference type="ChEBI" id="CHEBI:15378"/>
        <dbReference type="ChEBI" id="CHEBI:17757"/>
        <dbReference type="ChEBI" id="CHEBI:57540"/>
        <dbReference type="ChEBI" id="CHEBI:57945"/>
        <dbReference type="ChEBI" id="CHEBI:62192"/>
    </reaction>
</comment>
<comment type="catalytic activity">
    <reaction evidence="1">
        <text>a plastoquinone + NADPH + (n+1) H(+)(in) = a plastoquinol + NADP(+) + n H(+)(out)</text>
        <dbReference type="Rhea" id="RHEA:42612"/>
        <dbReference type="Rhea" id="RHEA-COMP:9561"/>
        <dbReference type="Rhea" id="RHEA-COMP:9562"/>
        <dbReference type="ChEBI" id="CHEBI:15378"/>
        <dbReference type="ChEBI" id="CHEBI:17757"/>
        <dbReference type="ChEBI" id="CHEBI:57783"/>
        <dbReference type="ChEBI" id="CHEBI:58349"/>
        <dbReference type="ChEBI" id="CHEBI:62192"/>
    </reaction>
</comment>
<comment type="cofactor">
    <cofactor evidence="1">
        <name>[4Fe-4S] cluster</name>
        <dbReference type="ChEBI" id="CHEBI:49883"/>
    </cofactor>
    <text evidence="1">Binds 2 [4Fe-4S] clusters per subunit.</text>
</comment>
<comment type="subunit">
    <text evidence="1">NDH is composed of at least 16 different subunits, 5 of which are encoded in the nucleus.</text>
</comment>
<comment type="subcellular location">
    <subcellularLocation>
        <location evidence="1">Plastid</location>
        <location evidence="1">Chloroplast thylakoid membrane</location>
        <topology evidence="1">Peripheral membrane protein</topology>
    </subcellularLocation>
</comment>
<comment type="similarity">
    <text evidence="1">Belongs to the complex I 23 kDa subunit family.</text>
</comment>
<proteinExistence type="inferred from homology"/>
<protein>
    <recommendedName>
        <fullName evidence="1">NAD(P)H-quinone oxidoreductase subunit I, chloroplastic</fullName>
        <ecNumber evidence="1">7.1.1.-</ecNumber>
    </recommendedName>
    <alternativeName>
        <fullName evidence="1">NAD(P)H dehydrogenase subunit I</fullName>
        <shortName evidence="1">NDH subunit I</shortName>
    </alternativeName>
    <alternativeName>
        <fullName evidence="1">NADH-plastoquinone oxidoreductase subunit I</fullName>
    </alternativeName>
</protein>
<sequence>MLPMITGFMNYGQQTLRAARYIGQGFMITLSHTNRLPVTIQYPYEKLITSERFRGRIHFEFDKCIACEVCVRVCPIDLPVVDWKLETNIRKKRLLNYSIDFGICIFCGNCVEYCPTNCLSMTEEYEFSTYDRHELNYNQIALGRLPMSVIDDYTIRTILNSPQTKKG</sequence>
<accession>A4QLG3</accession>
<evidence type="ECO:0000255" key="1">
    <source>
        <dbReference type="HAMAP-Rule" id="MF_01351"/>
    </source>
</evidence>
<organism>
    <name type="scientific">Lepidium virginicum</name>
    <name type="common">Virginia pepperweed</name>
    <dbReference type="NCBI Taxonomy" id="59292"/>
    <lineage>
        <taxon>Eukaryota</taxon>
        <taxon>Viridiplantae</taxon>
        <taxon>Streptophyta</taxon>
        <taxon>Embryophyta</taxon>
        <taxon>Tracheophyta</taxon>
        <taxon>Spermatophyta</taxon>
        <taxon>Magnoliopsida</taxon>
        <taxon>eudicotyledons</taxon>
        <taxon>Gunneridae</taxon>
        <taxon>Pentapetalae</taxon>
        <taxon>rosids</taxon>
        <taxon>malvids</taxon>
        <taxon>Brassicales</taxon>
        <taxon>Brassicaceae</taxon>
        <taxon>Lepidieae</taxon>
        <taxon>Lepidium</taxon>
    </lineage>
</organism>